<organism>
    <name type="scientific">Pseudomonas putida (strain GB-1)</name>
    <dbReference type="NCBI Taxonomy" id="76869"/>
    <lineage>
        <taxon>Bacteria</taxon>
        <taxon>Pseudomonadati</taxon>
        <taxon>Pseudomonadota</taxon>
        <taxon>Gammaproteobacteria</taxon>
        <taxon>Pseudomonadales</taxon>
        <taxon>Pseudomonadaceae</taxon>
        <taxon>Pseudomonas</taxon>
    </lineage>
</organism>
<evidence type="ECO:0000255" key="1">
    <source>
        <dbReference type="HAMAP-Rule" id="MF_01369"/>
    </source>
</evidence>
<evidence type="ECO:0000305" key="2"/>
<reference key="1">
    <citation type="submission" date="2008-01" db="EMBL/GenBank/DDBJ databases">
        <title>Complete sequence of Pseudomonas putida GB-1.</title>
        <authorList>
            <consortium name="US DOE Joint Genome Institute"/>
            <person name="Copeland A."/>
            <person name="Lucas S."/>
            <person name="Lapidus A."/>
            <person name="Barry K."/>
            <person name="Glavina del Rio T."/>
            <person name="Dalin E."/>
            <person name="Tice H."/>
            <person name="Pitluck S."/>
            <person name="Bruce D."/>
            <person name="Goodwin L."/>
            <person name="Chertkov O."/>
            <person name="Brettin T."/>
            <person name="Detter J.C."/>
            <person name="Han C."/>
            <person name="Kuske C.R."/>
            <person name="Schmutz J."/>
            <person name="Larimer F."/>
            <person name="Land M."/>
            <person name="Hauser L."/>
            <person name="Kyrpides N."/>
            <person name="Kim E."/>
            <person name="McCarthy J.K."/>
            <person name="Richardson P."/>
        </authorList>
    </citation>
    <scope>NUCLEOTIDE SEQUENCE [LARGE SCALE GENOMIC DNA]</scope>
    <source>
        <strain>GB-1</strain>
    </source>
</reference>
<gene>
    <name evidence="1" type="primary">rplW</name>
    <name type="ordered locus">PputGB1_0486</name>
</gene>
<name>RL23_PSEPG</name>
<comment type="function">
    <text evidence="1">One of the early assembly proteins it binds 23S rRNA. One of the proteins that surrounds the polypeptide exit tunnel on the outside of the ribosome. Forms the main docking site for trigger factor binding to the ribosome.</text>
</comment>
<comment type="subunit">
    <text evidence="1">Part of the 50S ribosomal subunit. Contacts protein L29, and trigger factor when it is bound to the ribosome.</text>
</comment>
<comment type="similarity">
    <text evidence="1">Belongs to the universal ribosomal protein uL23 family.</text>
</comment>
<accession>B0KK69</accession>
<sequence length="99" mass="10900">MNQERVFKVLLGPHVSEKATVLAEKKGQFVFKVATDATKLEIKKAVEGLFNVKVENVSTVNVLGKTKRTARGLGKRNDWKKAIVSLQPGQDLDFSSSAE</sequence>
<proteinExistence type="inferred from homology"/>
<feature type="chain" id="PRO_1000087226" description="Large ribosomal subunit protein uL23">
    <location>
        <begin position="1"/>
        <end position="99"/>
    </location>
</feature>
<keyword id="KW-0687">Ribonucleoprotein</keyword>
<keyword id="KW-0689">Ribosomal protein</keyword>
<keyword id="KW-0694">RNA-binding</keyword>
<keyword id="KW-0699">rRNA-binding</keyword>
<protein>
    <recommendedName>
        <fullName evidence="1">Large ribosomal subunit protein uL23</fullName>
    </recommendedName>
    <alternativeName>
        <fullName evidence="2">50S ribosomal protein L23</fullName>
    </alternativeName>
</protein>
<dbReference type="EMBL" id="CP000926">
    <property type="protein sequence ID" value="ABY96397.1"/>
    <property type="molecule type" value="Genomic_DNA"/>
</dbReference>
<dbReference type="RefSeq" id="WP_003255484.1">
    <property type="nucleotide sequence ID" value="NC_010322.1"/>
</dbReference>
<dbReference type="SMR" id="B0KK69"/>
<dbReference type="GeneID" id="97165981"/>
<dbReference type="KEGG" id="ppg:PputGB1_0486"/>
<dbReference type="eggNOG" id="COG0089">
    <property type="taxonomic scope" value="Bacteria"/>
</dbReference>
<dbReference type="HOGENOM" id="CLU_037562_3_1_6"/>
<dbReference type="Proteomes" id="UP000002157">
    <property type="component" value="Chromosome"/>
</dbReference>
<dbReference type="GO" id="GO:1990904">
    <property type="term" value="C:ribonucleoprotein complex"/>
    <property type="evidence" value="ECO:0007669"/>
    <property type="project" value="UniProtKB-KW"/>
</dbReference>
<dbReference type="GO" id="GO:0005840">
    <property type="term" value="C:ribosome"/>
    <property type="evidence" value="ECO:0007669"/>
    <property type="project" value="UniProtKB-KW"/>
</dbReference>
<dbReference type="GO" id="GO:0019843">
    <property type="term" value="F:rRNA binding"/>
    <property type="evidence" value="ECO:0007669"/>
    <property type="project" value="UniProtKB-UniRule"/>
</dbReference>
<dbReference type="GO" id="GO:0003735">
    <property type="term" value="F:structural constituent of ribosome"/>
    <property type="evidence" value="ECO:0007669"/>
    <property type="project" value="InterPro"/>
</dbReference>
<dbReference type="GO" id="GO:0006412">
    <property type="term" value="P:translation"/>
    <property type="evidence" value="ECO:0007669"/>
    <property type="project" value="UniProtKB-UniRule"/>
</dbReference>
<dbReference type="FunFam" id="3.30.70.330:FF:000001">
    <property type="entry name" value="50S ribosomal protein L23"/>
    <property type="match status" value="1"/>
</dbReference>
<dbReference type="Gene3D" id="3.30.70.330">
    <property type="match status" value="1"/>
</dbReference>
<dbReference type="HAMAP" id="MF_01369_B">
    <property type="entry name" value="Ribosomal_uL23_B"/>
    <property type="match status" value="1"/>
</dbReference>
<dbReference type="InterPro" id="IPR012677">
    <property type="entry name" value="Nucleotide-bd_a/b_plait_sf"/>
</dbReference>
<dbReference type="InterPro" id="IPR013025">
    <property type="entry name" value="Ribosomal_uL23-like"/>
</dbReference>
<dbReference type="InterPro" id="IPR012678">
    <property type="entry name" value="Ribosomal_uL23/eL15/eS24_sf"/>
</dbReference>
<dbReference type="NCBIfam" id="NF004359">
    <property type="entry name" value="PRK05738.1-3"/>
    <property type="match status" value="1"/>
</dbReference>
<dbReference type="NCBIfam" id="NF004363">
    <property type="entry name" value="PRK05738.2-4"/>
    <property type="match status" value="1"/>
</dbReference>
<dbReference type="PANTHER" id="PTHR11620">
    <property type="entry name" value="60S RIBOSOMAL PROTEIN L23A"/>
    <property type="match status" value="1"/>
</dbReference>
<dbReference type="Pfam" id="PF00276">
    <property type="entry name" value="Ribosomal_L23"/>
    <property type="match status" value="1"/>
</dbReference>
<dbReference type="SUPFAM" id="SSF54189">
    <property type="entry name" value="Ribosomal proteins S24e, L23 and L15e"/>
    <property type="match status" value="1"/>
</dbReference>